<feature type="chain" id="PRO_0000126996" description="Phenylalanine--tRNA ligase beta subunit">
    <location>
        <begin position="1"/>
        <end position="566"/>
    </location>
</feature>
<feature type="domain" description="B5" evidence="1">
    <location>
        <begin position="287"/>
        <end position="362"/>
    </location>
</feature>
<feature type="binding site" evidence="1">
    <location>
        <position position="340"/>
    </location>
    <ligand>
        <name>Mg(2+)</name>
        <dbReference type="ChEBI" id="CHEBI:18420"/>
        <note>shared with alpha subunit</note>
    </ligand>
</feature>
<feature type="binding site" evidence="1">
    <location>
        <position position="346"/>
    </location>
    <ligand>
        <name>Mg(2+)</name>
        <dbReference type="ChEBI" id="CHEBI:18420"/>
        <note>shared with alpha subunit</note>
    </ligand>
</feature>
<feature type="binding site" evidence="1">
    <location>
        <position position="349"/>
    </location>
    <ligand>
        <name>Mg(2+)</name>
        <dbReference type="ChEBI" id="CHEBI:18420"/>
        <note>shared with alpha subunit</note>
    </ligand>
</feature>
<feature type="binding site" evidence="1">
    <location>
        <position position="350"/>
    </location>
    <ligand>
        <name>Mg(2+)</name>
        <dbReference type="ChEBI" id="CHEBI:18420"/>
        <note>shared with alpha subunit</note>
    </ligand>
</feature>
<dbReference type="EC" id="6.1.1.20" evidence="1"/>
<dbReference type="EMBL" id="U82978">
    <property type="protein sequence ID" value="AAB41019.1"/>
    <property type="molecule type" value="Genomic_DNA"/>
</dbReference>
<dbReference type="EMBL" id="AE000783">
    <property type="protein sequence ID" value="AAC66870.1"/>
    <property type="molecule type" value="Genomic_DNA"/>
</dbReference>
<dbReference type="PIR" id="A70164">
    <property type="entry name" value="A70164"/>
</dbReference>
<dbReference type="RefSeq" id="NP_212648.1">
    <property type="nucleotide sequence ID" value="NC_001318.1"/>
</dbReference>
<dbReference type="RefSeq" id="WP_010889759.1">
    <property type="nucleotide sequence ID" value="NC_001318.1"/>
</dbReference>
<dbReference type="SMR" id="P94283"/>
<dbReference type="STRING" id="224326.BB_0514"/>
<dbReference type="PaxDb" id="224326-BB_0514"/>
<dbReference type="EnsemblBacteria" id="AAC66870">
    <property type="protein sequence ID" value="AAC66870"/>
    <property type="gene ID" value="BB_0514"/>
</dbReference>
<dbReference type="KEGG" id="bbu:BB_0514"/>
<dbReference type="PATRIC" id="fig|224326.49.peg.905"/>
<dbReference type="HOGENOM" id="CLU_020279_3_0_12"/>
<dbReference type="OrthoDB" id="9805455at2"/>
<dbReference type="Proteomes" id="UP000001807">
    <property type="component" value="Chromosome"/>
</dbReference>
<dbReference type="GO" id="GO:0009328">
    <property type="term" value="C:phenylalanine-tRNA ligase complex"/>
    <property type="evidence" value="ECO:0007669"/>
    <property type="project" value="TreeGrafter"/>
</dbReference>
<dbReference type="GO" id="GO:0005524">
    <property type="term" value="F:ATP binding"/>
    <property type="evidence" value="ECO:0007669"/>
    <property type="project" value="UniProtKB-UniRule"/>
</dbReference>
<dbReference type="GO" id="GO:0000287">
    <property type="term" value="F:magnesium ion binding"/>
    <property type="evidence" value="ECO:0007669"/>
    <property type="project" value="InterPro"/>
</dbReference>
<dbReference type="GO" id="GO:0004826">
    <property type="term" value="F:phenylalanine-tRNA ligase activity"/>
    <property type="evidence" value="ECO:0007669"/>
    <property type="project" value="UniProtKB-UniRule"/>
</dbReference>
<dbReference type="GO" id="GO:0003723">
    <property type="term" value="F:RNA binding"/>
    <property type="evidence" value="ECO:0007669"/>
    <property type="project" value="InterPro"/>
</dbReference>
<dbReference type="GO" id="GO:0006432">
    <property type="term" value="P:phenylalanyl-tRNA aminoacylation"/>
    <property type="evidence" value="ECO:0007669"/>
    <property type="project" value="UniProtKB-UniRule"/>
</dbReference>
<dbReference type="CDD" id="cd00769">
    <property type="entry name" value="PheRS_beta_core"/>
    <property type="match status" value="1"/>
</dbReference>
<dbReference type="Gene3D" id="3.30.56.10">
    <property type="match status" value="2"/>
</dbReference>
<dbReference type="Gene3D" id="3.30.930.10">
    <property type="entry name" value="Bira Bifunctional Protein, Domain 2"/>
    <property type="match status" value="1"/>
</dbReference>
<dbReference type="Gene3D" id="3.50.40.10">
    <property type="entry name" value="Phenylalanyl-trna Synthetase, Chain B, domain 3"/>
    <property type="match status" value="1"/>
</dbReference>
<dbReference type="HAMAP" id="MF_00284">
    <property type="entry name" value="Phe_tRNA_synth_beta2"/>
    <property type="match status" value="1"/>
</dbReference>
<dbReference type="InterPro" id="IPR045864">
    <property type="entry name" value="aa-tRNA-synth_II/BPL/LPL"/>
</dbReference>
<dbReference type="InterPro" id="IPR005146">
    <property type="entry name" value="B3/B4_tRNA-bd"/>
</dbReference>
<dbReference type="InterPro" id="IPR009061">
    <property type="entry name" value="DNA-bd_dom_put_sf"/>
</dbReference>
<dbReference type="InterPro" id="IPR045060">
    <property type="entry name" value="Phe-tRNA-ligase_IIc_bsu"/>
</dbReference>
<dbReference type="InterPro" id="IPR004531">
    <property type="entry name" value="Phe-tRNA-synth_IIc_bsu_arc_euk"/>
</dbReference>
<dbReference type="InterPro" id="IPR020825">
    <property type="entry name" value="Phe-tRNA_synthase-like_B3/B4"/>
</dbReference>
<dbReference type="InterPro" id="IPR022918">
    <property type="entry name" value="Phe_tRNA_ligase_beta2_arc"/>
</dbReference>
<dbReference type="InterPro" id="IPR041616">
    <property type="entry name" value="PheRS_beta_core"/>
</dbReference>
<dbReference type="InterPro" id="IPR005147">
    <property type="entry name" value="tRNA_synthase_B5-dom"/>
</dbReference>
<dbReference type="NCBIfam" id="TIGR00471">
    <property type="entry name" value="pheT_arch"/>
    <property type="match status" value="1"/>
</dbReference>
<dbReference type="PANTHER" id="PTHR10947:SF0">
    <property type="entry name" value="PHENYLALANINE--TRNA LIGASE BETA SUBUNIT"/>
    <property type="match status" value="1"/>
</dbReference>
<dbReference type="PANTHER" id="PTHR10947">
    <property type="entry name" value="PHENYLALANYL-TRNA SYNTHETASE BETA CHAIN AND LEUCINE-RICH REPEAT-CONTAINING PROTEIN 47"/>
    <property type="match status" value="1"/>
</dbReference>
<dbReference type="Pfam" id="PF03484">
    <property type="entry name" value="B5"/>
    <property type="match status" value="1"/>
</dbReference>
<dbReference type="Pfam" id="PF17759">
    <property type="entry name" value="tRNA_synthFbeta"/>
    <property type="match status" value="1"/>
</dbReference>
<dbReference type="SMART" id="SM00873">
    <property type="entry name" value="B3_4"/>
    <property type="match status" value="1"/>
</dbReference>
<dbReference type="SMART" id="SM00874">
    <property type="entry name" value="B5"/>
    <property type="match status" value="1"/>
</dbReference>
<dbReference type="SUPFAM" id="SSF55681">
    <property type="entry name" value="Class II aaRS and biotin synthetases"/>
    <property type="match status" value="1"/>
</dbReference>
<dbReference type="SUPFAM" id="SSF46955">
    <property type="entry name" value="Putative DNA-binding domain"/>
    <property type="match status" value="1"/>
</dbReference>
<dbReference type="PROSITE" id="PS51483">
    <property type="entry name" value="B5"/>
    <property type="match status" value="1"/>
</dbReference>
<comment type="catalytic activity">
    <reaction evidence="1">
        <text>tRNA(Phe) + L-phenylalanine + ATP = L-phenylalanyl-tRNA(Phe) + AMP + diphosphate + H(+)</text>
        <dbReference type="Rhea" id="RHEA:19413"/>
        <dbReference type="Rhea" id="RHEA-COMP:9668"/>
        <dbReference type="Rhea" id="RHEA-COMP:9699"/>
        <dbReference type="ChEBI" id="CHEBI:15378"/>
        <dbReference type="ChEBI" id="CHEBI:30616"/>
        <dbReference type="ChEBI" id="CHEBI:33019"/>
        <dbReference type="ChEBI" id="CHEBI:58095"/>
        <dbReference type="ChEBI" id="CHEBI:78442"/>
        <dbReference type="ChEBI" id="CHEBI:78531"/>
        <dbReference type="ChEBI" id="CHEBI:456215"/>
        <dbReference type="EC" id="6.1.1.20"/>
    </reaction>
</comment>
<comment type="cofactor">
    <cofactor evidence="1">
        <name>Mg(2+)</name>
        <dbReference type="ChEBI" id="CHEBI:18420"/>
    </cofactor>
</comment>
<comment type="subunit">
    <text evidence="1">Tetramer of two alpha and two beta subunits.</text>
</comment>
<comment type="subcellular location">
    <subcellularLocation>
        <location evidence="1">Cytoplasm</location>
    </subcellularLocation>
</comment>
<comment type="similarity">
    <text evidence="1 2">Belongs to the phenylalanyl-tRNA synthetase beta subunit family. Type 2 subfamily.</text>
</comment>
<reference key="1">
    <citation type="submission" date="1997-01" db="EMBL/GenBank/DDBJ databases">
        <title>Phenylalanyl-tRNA synthetase genes (alpha and beta subunits) and thioredoxin reductase gene of Borrelia burgdorferi.</title>
        <authorList>
            <person name="Barbour A.G."/>
            <person name="Hinnebusch J."/>
        </authorList>
    </citation>
    <scope>NUCLEOTIDE SEQUENCE [GENOMIC DNA]</scope>
    <source>
        <strain>ATCC 35210 / DSM 4680 / CIP 102532 / B31</strain>
    </source>
</reference>
<reference key="2">
    <citation type="journal article" date="1997" name="Nature">
        <title>Genomic sequence of a Lyme disease spirochaete, Borrelia burgdorferi.</title>
        <authorList>
            <person name="Fraser C.M."/>
            <person name="Casjens S."/>
            <person name="Huang W.M."/>
            <person name="Sutton G.G."/>
            <person name="Clayton R.A."/>
            <person name="Lathigra R."/>
            <person name="White O."/>
            <person name="Ketchum K.A."/>
            <person name="Dodson R.J."/>
            <person name="Hickey E.K."/>
            <person name="Gwinn M.L."/>
            <person name="Dougherty B.A."/>
            <person name="Tomb J.-F."/>
            <person name="Fleischmann R.D."/>
            <person name="Richardson D.L."/>
            <person name="Peterson J.D."/>
            <person name="Kerlavage A.R."/>
            <person name="Quackenbush J."/>
            <person name="Salzberg S.L."/>
            <person name="Hanson M."/>
            <person name="van Vugt R."/>
            <person name="Palmer N."/>
            <person name="Adams M.D."/>
            <person name="Gocayne J.D."/>
            <person name="Weidman J.F."/>
            <person name="Utterback T.R."/>
            <person name="Watthey L."/>
            <person name="McDonald L.A."/>
            <person name="Artiach P."/>
            <person name="Bowman C."/>
            <person name="Garland S.A."/>
            <person name="Fujii C."/>
            <person name="Cotton M.D."/>
            <person name="Horst K."/>
            <person name="Roberts K.M."/>
            <person name="Hatch B."/>
            <person name="Smith H.O."/>
            <person name="Venter J.C."/>
        </authorList>
    </citation>
    <scope>NUCLEOTIDE SEQUENCE [LARGE SCALE GENOMIC DNA]</scope>
    <source>
        <strain>ATCC 35210 / DSM 4680 / CIP 102532 / B31</strain>
    </source>
</reference>
<keyword id="KW-0030">Aminoacyl-tRNA synthetase</keyword>
<keyword id="KW-0067">ATP-binding</keyword>
<keyword id="KW-0963">Cytoplasm</keyword>
<keyword id="KW-0436">Ligase</keyword>
<keyword id="KW-0460">Magnesium</keyword>
<keyword id="KW-0479">Metal-binding</keyword>
<keyword id="KW-0547">Nucleotide-binding</keyword>
<keyword id="KW-0648">Protein biosynthesis</keyword>
<keyword id="KW-1185">Reference proteome</keyword>
<gene>
    <name evidence="1" type="primary">pheT</name>
    <name type="ordered locus">BB_0514</name>
</gene>
<organism>
    <name type="scientific">Borreliella burgdorferi (strain ATCC 35210 / DSM 4680 / CIP 102532 / B31)</name>
    <name type="common">Borrelia burgdorferi</name>
    <dbReference type="NCBI Taxonomy" id="224326"/>
    <lineage>
        <taxon>Bacteria</taxon>
        <taxon>Pseudomonadati</taxon>
        <taxon>Spirochaetota</taxon>
        <taxon>Spirochaetia</taxon>
        <taxon>Spirochaetales</taxon>
        <taxon>Borreliaceae</taxon>
        <taxon>Borreliella</taxon>
    </lineage>
</organism>
<evidence type="ECO:0000255" key="1">
    <source>
        <dbReference type="HAMAP-Rule" id="MF_00284"/>
    </source>
</evidence>
<evidence type="ECO:0000305" key="2"/>
<protein>
    <recommendedName>
        <fullName evidence="1">Phenylalanine--tRNA ligase beta subunit</fullName>
        <ecNumber evidence="1">6.1.1.20</ecNumber>
    </recommendedName>
    <alternativeName>
        <fullName evidence="1">Phenylalanyl-tRNA synthetase beta subunit</fullName>
        <shortName evidence="1">PheRS</shortName>
    </alternativeName>
</protein>
<proteinExistence type="inferred from homology"/>
<accession>P94283</accession>
<name>SYFB_BORBU</name>
<sequence length="566" mass="65174">MPKLEIYKNLFLDKIGKNFTNLEISELLEPFKAEFDGFDESSGKIKIEFNDTNRPDLWSYLGLARQIKTYFFGEMPYYDFFSKKGDFKKFYGEILVDGKMSQIRPFIFGFLAKGLIINDKMLETLIQFQEKLCQNYGQKRRRIAMGMYNSNFIKFPISYIASSPNHKFVPFGMDYELSLLEINEKHPKGLEYSHIIKNFDKFPLLLDDNNNVVSYPPIINSNNIGSLKVGDTDLFVEVTGIDFEATLLALSIAACDFYDMGFEILPVKTVFREPFNLDFKELVCPYYFQEEVEFNVENINRLLGSNLTLERICLSLKKMGVNSYSKDFKNYIVPPFYRNDFLHEVDVIEDVMIGEGLSSFNPELPKAFAVGRLSPLEEFSRNVRNLMVGMGFQEMIYNYMGSKKDFIDRMNINDQNFLKVSNPMTENYEYIRASIIPNLLKSESVSSNFPYPHKIFEIGKVALKNLDTTEGTSTFTNLAFLMSGKEISFNEINSIVATLFYYLNIEINLIESKTTFYINGRGADIVIEGFNIGGFGEISPYVLNNFGIFIPCSVFEVNINKLMSRS</sequence>